<evidence type="ECO:0000250" key="1"/>
<evidence type="ECO:0000305" key="2"/>
<evidence type="ECO:0007829" key="3">
    <source>
        <dbReference type="PDB" id="7CSL"/>
    </source>
</evidence>
<organism>
    <name type="scientific">Pyrococcus horikoshii (strain ATCC 700860 / DSM 12428 / JCM 9974 / NBRC 100139 / OT-3)</name>
    <dbReference type="NCBI Taxonomy" id="70601"/>
    <lineage>
        <taxon>Archaea</taxon>
        <taxon>Methanobacteriati</taxon>
        <taxon>Methanobacteriota</taxon>
        <taxon>Thermococci</taxon>
        <taxon>Thermococcales</taxon>
        <taxon>Thermococcaceae</taxon>
        <taxon>Pyrococcus</taxon>
    </lineage>
</organism>
<protein>
    <recommendedName>
        <fullName>Elongation factor 1-beta</fullName>
        <shortName>EF-1-beta</shortName>
    </recommendedName>
    <alternativeName>
        <fullName>aEF-1beta</fullName>
    </alternativeName>
</protein>
<dbReference type="EMBL" id="BA000001">
    <property type="status" value="NOT_ANNOTATED_CDS"/>
    <property type="molecule type" value="Genomic_DNA"/>
</dbReference>
<dbReference type="RefSeq" id="WP_010884146.1">
    <property type="nucleotide sequence ID" value="NC_000961.1"/>
</dbReference>
<dbReference type="PDB" id="2YY3">
    <property type="method" value="X-ray"/>
    <property type="resolution" value="2.50 A"/>
    <property type="chains" value="A/B/C=1-91"/>
</dbReference>
<dbReference type="PDB" id="7CSL">
    <property type="method" value="X-ray"/>
    <property type="resolution" value="2.00 A"/>
    <property type="chains" value="C/D=1-91"/>
</dbReference>
<dbReference type="PDBsum" id="2YY3"/>
<dbReference type="PDBsum" id="7CSL"/>
<dbReference type="SMR" id="P58748"/>
<dbReference type="GeneID" id="1443928"/>
<dbReference type="OrthoDB" id="84643at2157"/>
<dbReference type="EvolutionaryTrace" id="P58748"/>
<dbReference type="Proteomes" id="UP000000752">
    <property type="component" value="Chromosome"/>
</dbReference>
<dbReference type="GO" id="GO:0003746">
    <property type="term" value="F:translation elongation factor activity"/>
    <property type="evidence" value="ECO:0007669"/>
    <property type="project" value="UniProtKB-UniRule"/>
</dbReference>
<dbReference type="CDD" id="cd00292">
    <property type="entry name" value="EF1B"/>
    <property type="match status" value="1"/>
</dbReference>
<dbReference type="Gene3D" id="3.30.70.60">
    <property type="match status" value="1"/>
</dbReference>
<dbReference type="HAMAP" id="MF_00043">
    <property type="entry name" value="EF1_beta"/>
    <property type="match status" value="1"/>
</dbReference>
<dbReference type="InterPro" id="IPR036219">
    <property type="entry name" value="eEF-1beta-like_sf"/>
</dbReference>
<dbReference type="InterPro" id="IPR014038">
    <property type="entry name" value="EF1B_bsu/dsu_GNE"/>
</dbReference>
<dbReference type="InterPro" id="IPR014717">
    <property type="entry name" value="Transl_elong_EF1B/ribsomal_bS6"/>
</dbReference>
<dbReference type="InterPro" id="IPR004542">
    <property type="entry name" value="Transl_elong_EF1B_B_arc"/>
</dbReference>
<dbReference type="NCBIfam" id="TIGR00489">
    <property type="entry name" value="aEF-1_beta"/>
    <property type="match status" value="1"/>
</dbReference>
<dbReference type="NCBIfam" id="NF001670">
    <property type="entry name" value="PRK00435.1"/>
    <property type="match status" value="1"/>
</dbReference>
<dbReference type="PANTHER" id="PTHR39647">
    <property type="entry name" value="ELONGATION FACTOR 1-BETA"/>
    <property type="match status" value="1"/>
</dbReference>
<dbReference type="PANTHER" id="PTHR39647:SF1">
    <property type="entry name" value="ELONGATION FACTOR 1-BETA"/>
    <property type="match status" value="1"/>
</dbReference>
<dbReference type="Pfam" id="PF00736">
    <property type="entry name" value="EF1_GNE"/>
    <property type="match status" value="1"/>
</dbReference>
<dbReference type="PIRSF" id="PIRSF006521">
    <property type="entry name" value="Transl_elong_EF1B_B_arc"/>
    <property type="match status" value="1"/>
</dbReference>
<dbReference type="SMART" id="SM00888">
    <property type="entry name" value="EF1_GNE"/>
    <property type="match status" value="1"/>
</dbReference>
<dbReference type="SUPFAM" id="SSF54984">
    <property type="entry name" value="eEF-1beta-like"/>
    <property type="match status" value="1"/>
</dbReference>
<accession>P58748</accession>
<keyword id="KW-0002">3D-structure</keyword>
<keyword id="KW-0251">Elongation factor</keyword>
<keyword id="KW-0648">Protein biosynthesis</keyword>
<name>EF1B_PYRHO</name>
<reference key="1">
    <citation type="journal article" date="1998" name="DNA Res.">
        <title>Complete sequence and gene organization of the genome of a hyper-thermophilic archaebacterium, Pyrococcus horikoshii OT3.</title>
        <authorList>
            <person name="Kawarabayasi Y."/>
            <person name="Sawada M."/>
            <person name="Horikawa H."/>
            <person name="Haikawa Y."/>
            <person name="Hino Y."/>
            <person name="Yamamoto S."/>
            <person name="Sekine M."/>
            <person name="Baba S."/>
            <person name="Kosugi H."/>
            <person name="Hosoyama A."/>
            <person name="Nagai Y."/>
            <person name="Sakai M."/>
            <person name="Ogura K."/>
            <person name="Otsuka R."/>
            <person name="Nakazawa H."/>
            <person name="Takamiya M."/>
            <person name="Ohfuku Y."/>
            <person name="Funahashi T."/>
            <person name="Tanaka T."/>
            <person name="Kudoh Y."/>
            <person name="Yamazaki J."/>
            <person name="Kushida N."/>
            <person name="Oguchi A."/>
            <person name="Aoki K."/>
            <person name="Yoshizawa T."/>
            <person name="Nakamura Y."/>
            <person name="Robb F.T."/>
            <person name="Horikoshi K."/>
            <person name="Masuchi Y."/>
            <person name="Shizuya H."/>
            <person name="Kikuchi H."/>
        </authorList>
    </citation>
    <scope>NUCLEOTIDE SEQUENCE [LARGE SCALE GENOMIC DNA]</scope>
    <source>
        <strain>ATCC 700860 / DSM 12428 / JCM 9974 / NBRC 100139 / OT-3</strain>
    </source>
</reference>
<reference key="2">
    <citation type="unpublished observations" date="2001-08">
        <authorList>
            <person name="Michoud K."/>
        </authorList>
    </citation>
    <scope>IDENTIFICATION</scope>
</reference>
<sequence>MSDFNLVGVIRVMPTDPDVNLDELEEKLKKVIPEKYGLAKVEREPIAFGLVALKFYVLGRDEEGYSFDEVAEKFEEVENVESAEVETVSRI</sequence>
<feature type="chain" id="PRO_0000155065" description="Elongation factor 1-beta">
    <location>
        <begin position="1"/>
        <end position="91"/>
    </location>
</feature>
<feature type="strand" evidence="3">
    <location>
        <begin position="6"/>
        <end position="16"/>
    </location>
</feature>
<feature type="helix" evidence="3">
    <location>
        <begin position="21"/>
        <end position="29"/>
    </location>
</feature>
<feature type="strand" evidence="3">
    <location>
        <begin position="37"/>
        <end position="47"/>
    </location>
</feature>
<feature type="strand" evidence="3">
    <location>
        <begin position="50"/>
        <end position="59"/>
    </location>
</feature>
<feature type="helix" evidence="3">
    <location>
        <begin position="67"/>
        <end position="75"/>
    </location>
</feature>
<feature type="strand" evidence="3">
    <location>
        <begin position="80"/>
        <end position="90"/>
    </location>
</feature>
<proteinExistence type="evidence at protein level"/>
<gene>
    <name type="primary">ef1b</name>
    <name type="ordered locus">PH0026.1</name>
</gene>
<comment type="function">
    <text evidence="1">Promotes the exchange of GDP for GTP in EF-1-alpha/GDP, thus allowing the regeneration of EF-1-alpha/GTP that could then be used to form the ternary complex EF-1-alpha/GTP/AAtRNA.</text>
</comment>
<comment type="similarity">
    <text evidence="2">Belongs to the EF-1-beta/EF-1-delta family.</text>
</comment>